<keyword id="KW-1185">Reference proteome</keyword>
<keyword id="KW-0687">Ribonucleoprotein</keyword>
<keyword id="KW-0689">Ribosomal protein</keyword>
<keyword id="KW-0694">RNA-binding</keyword>
<keyword id="KW-0699">rRNA-binding</keyword>
<protein>
    <recommendedName>
        <fullName evidence="1">Large ribosomal subunit protein uL2</fullName>
    </recommendedName>
    <alternativeName>
        <fullName evidence="3">50S ribosomal protein L2</fullName>
    </alternativeName>
</protein>
<evidence type="ECO:0000255" key="1">
    <source>
        <dbReference type="HAMAP-Rule" id="MF_01320"/>
    </source>
</evidence>
<evidence type="ECO:0000256" key="2">
    <source>
        <dbReference type="SAM" id="MobiDB-lite"/>
    </source>
</evidence>
<evidence type="ECO:0000305" key="3"/>
<feature type="chain" id="PRO_0000309979" description="Large ribosomal subunit protein uL2">
    <location>
        <begin position="1"/>
        <end position="274"/>
    </location>
</feature>
<feature type="region of interest" description="Disordered" evidence="2">
    <location>
        <begin position="224"/>
        <end position="256"/>
    </location>
</feature>
<feature type="compositionally biased region" description="Basic and acidic residues" evidence="2">
    <location>
        <begin position="229"/>
        <end position="246"/>
    </location>
</feature>
<comment type="function">
    <text evidence="1">One of the primary rRNA binding proteins. Required for association of the 30S and 50S subunits to form the 70S ribosome, for tRNA binding and peptide bond formation. It has been suggested to have peptidyltransferase activity; this is somewhat controversial. Makes several contacts with the 16S rRNA in the 70S ribosome.</text>
</comment>
<comment type="subunit">
    <text evidence="1">Part of the 50S ribosomal subunit. Forms a bridge to the 30S subunit in the 70S ribosome.</text>
</comment>
<comment type="similarity">
    <text evidence="1">Belongs to the universal ribosomal protein uL2 family.</text>
</comment>
<sequence length="274" mass="30326">MAVIKMKPTSPGMRGMVKISRDHLHKGEPYAPLLEPQFQHSGRNNNGHITVRHKGGGHKHHYRVVDFKRNKDAIPAKVERIEYDPNRTAHIALICYADGERAYIIAPRGLEVGATILSGSEAPIRVGNTLPIRNIPVGSTIHCIEMQIGKGAQIARSAGTSATLLAREGTYAQVRMRSGEVRKIHIECRATIGEVANEEHSLRRLGKAGVKRWMGIRPTVRGVVMNPVDHPHGGGEGKTGEGRHPVDPWGNLTKGYRTRNNKRTQVMIVSRRKK</sequence>
<gene>
    <name evidence="1" type="primary">rplB</name>
    <name type="ordered locus">Pnap_0206</name>
</gene>
<proteinExistence type="inferred from homology"/>
<name>RL2_POLNA</name>
<dbReference type="EMBL" id="CP000529">
    <property type="protein sequence ID" value="ABM35531.1"/>
    <property type="molecule type" value="Genomic_DNA"/>
</dbReference>
<dbReference type="RefSeq" id="WP_011799640.1">
    <property type="nucleotide sequence ID" value="NC_008781.1"/>
</dbReference>
<dbReference type="SMR" id="A1VIQ3"/>
<dbReference type="STRING" id="365044.Pnap_0206"/>
<dbReference type="KEGG" id="pna:Pnap_0206"/>
<dbReference type="eggNOG" id="COG0090">
    <property type="taxonomic scope" value="Bacteria"/>
</dbReference>
<dbReference type="HOGENOM" id="CLU_036235_2_1_4"/>
<dbReference type="OrthoDB" id="9778722at2"/>
<dbReference type="Proteomes" id="UP000000644">
    <property type="component" value="Chromosome"/>
</dbReference>
<dbReference type="GO" id="GO:0015934">
    <property type="term" value="C:large ribosomal subunit"/>
    <property type="evidence" value="ECO:0007669"/>
    <property type="project" value="InterPro"/>
</dbReference>
<dbReference type="GO" id="GO:0019843">
    <property type="term" value="F:rRNA binding"/>
    <property type="evidence" value="ECO:0007669"/>
    <property type="project" value="UniProtKB-UniRule"/>
</dbReference>
<dbReference type="GO" id="GO:0003735">
    <property type="term" value="F:structural constituent of ribosome"/>
    <property type="evidence" value="ECO:0007669"/>
    <property type="project" value="InterPro"/>
</dbReference>
<dbReference type="GO" id="GO:0016740">
    <property type="term" value="F:transferase activity"/>
    <property type="evidence" value="ECO:0007669"/>
    <property type="project" value="InterPro"/>
</dbReference>
<dbReference type="GO" id="GO:0002181">
    <property type="term" value="P:cytoplasmic translation"/>
    <property type="evidence" value="ECO:0007669"/>
    <property type="project" value="TreeGrafter"/>
</dbReference>
<dbReference type="FunFam" id="2.30.30.30:FF:000001">
    <property type="entry name" value="50S ribosomal protein L2"/>
    <property type="match status" value="1"/>
</dbReference>
<dbReference type="FunFam" id="2.40.50.140:FF:000003">
    <property type="entry name" value="50S ribosomal protein L2"/>
    <property type="match status" value="1"/>
</dbReference>
<dbReference type="FunFam" id="4.10.950.10:FF:000001">
    <property type="entry name" value="50S ribosomal protein L2"/>
    <property type="match status" value="1"/>
</dbReference>
<dbReference type="Gene3D" id="2.30.30.30">
    <property type="match status" value="1"/>
</dbReference>
<dbReference type="Gene3D" id="2.40.50.140">
    <property type="entry name" value="Nucleic acid-binding proteins"/>
    <property type="match status" value="1"/>
</dbReference>
<dbReference type="Gene3D" id="4.10.950.10">
    <property type="entry name" value="Ribosomal protein L2, domain 3"/>
    <property type="match status" value="1"/>
</dbReference>
<dbReference type="HAMAP" id="MF_01320_B">
    <property type="entry name" value="Ribosomal_uL2_B"/>
    <property type="match status" value="1"/>
</dbReference>
<dbReference type="InterPro" id="IPR012340">
    <property type="entry name" value="NA-bd_OB-fold"/>
</dbReference>
<dbReference type="InterPro" id="IPR014722">
    <property type="entry name" value="Rib_uL2_dom2"/>
</dbReference>
<dbReference type="InterPro" id="IPR002171">
    <property type="entry name" value="Ribosomal_uL2"/>
</dbReference>
<dbReference type="InterPro" id="IPR005880">
    <property type="entry name" value="Ribosomal_uL2_bac/org-type"/>
</dbReference>
<dbReference type="InterPro" id="IPR022669">
    <property type="entry name" value="Ribosomal_uL2_C"/>
</dbReference>
<dbReference type="InterPro" id="IPR022671">
    <property type="entry name" value="Ribosomal_uL2_CS"/>
</dbReference>
<dbReference type="InterPro" id="IPR014726">
    <property type="entry name" value="Ribosomal_uL2_dom3"/>
</dbReference>
<dbReference type="InterPro" id="IPR022666">
    <property type="entry name" value="Ribosomal_uL2_RNA-bd_dom"/>
</dbReference>
<dbReference type="InterPro" id="IPR008991">
    <property type="entry name" value="Translation_prot_SH3-like_sf"/>
</dbReference>
<dbReference type="NCBIfam" id="TIGR01171">
    <property type="entry name" value="rplB_bact"/>
    <property type="match status" value="1"/>
</dbReference>
<dbReference type="PANTHER" id="PTHR13691:SF5">
    <property type="entry name" value="LARGE RIBOSOMAL SUBUNIT PROTEIN UL2M"/>
    <property type="match status" value="1"/>
</dbReference>
<dbReference type="PANTHER" id="PTHR13691">
    <property type="entry name" value="RIBOSOMAL PROTEIN L2"/>
    <property type="match status" value="1"/>
</dbReference>
<dbReference type="Pfam" id="PF00181">
    <property type="entry name" value="Ribosomal_L2"/>
    <property type="match status" value="1"/>
</dbReference>
<dbReference type="Pfam" id="PF03947">
    <property type="entry name" value="Ribosomal_L2_C"/>
    <property type="match status" value="1"/>
</dbReference>
<dbReference type="PIRSF" id="PIRSF002158">
    <property type="entry name" value="Ribosomal_L2"/>
    <property type="match status" value="1"/>
</dbReference>
<dbReference type="SMART" id="SM01383">
    <property type="entry name" value="Ribosomal_L2"/>
    <property type="match status" value="1"/>
</dbReference>
<dbReference type="SMART" id="SM01382">
    <property type="entry name" value="Ribosomal_L2_C"/>
    <property type="match status" value="1"/>
</dbReference>
<dbReference type="SUPFAM" id="SSF50249">
    <property type="entry name" value="Nucleic acid-binding proteins"/>
    <property type="match status" value="1"/>
</dbReference>
<dbReference type="SUPFAM" id="SSF50104">
    <property type="entry name" value="Translation proteins SH3-like domain"/>
    <property type="match status" value="1"/>
</dbReference>
<dbReference type="PROSITE" id="PS00467">
    <property type="entry name" value="RIBOSOMAL_L2"/>
    <property type="match status" value="1"/>
</dbReference>
<reference key="1">
    <citation type="journal article" date="2009" name="Environ. Microbiol.">
        <title>The genome of Polaromonas naphthalenivorans strain CJ2, isolated from coal tar-contaminated sediment, reveals physiological and metabolic versatility and evolution through extensive horizontal gene transfer.</title>
        <authorList>
            <person name="Yagi J.M."/>
            <person name="Sims D."/>
            <person name="Brettin T."/>
            <person name="Bruce D."/>
            <person name="Madsen E.L."/>
        </authorList>
    </citation>
    <scope>NUCLEOTIDE SEQUENCE [LARGE SCALE GENOMIC DNA]</scope>
    <source>
        <strain>CJ2</strain>
    </source>
</reference>
<organism>
    <name type="scientific">Polaromonas naphthalenivorans (strain CJ2)</name>
    <dbReference type="NCBI Taxonomy" id="365044"/>
    <lineage>
        <taxon>Bacteria</taxon>
        <taxon>Pseudomonadati</taxon>
        <taxon>Pseudomonadota</taxon>
        <taxon>Betaproteobacteria</taxon>
        <taxon>Burkholderiales</taxon>
        <taxon>Comamonadaceae</taxon>
        <taxon>Polaromonas</taxon>
    </lineage>
</organism>
<accession>A1VIQ3</accession>